<gene>
    <name type="primary">PTMS</name>
</gene>
<proteinExistence type="evidence at protein level"/>
<sequence>MSEKSVEAAAELSAKDLKEKKEKVEEKASRKERKKEVVEEEENGAEEEEEETAEDGEEEDEGEEEDEEEEEEDDEGPALKRAAEEEDEADPKRQKTENGASA</sequence>
<reference key="1">
    <citation type="journal article" date="1989" name="Biochem. Biophys. Res. Commun.">
        <title>The sequence of human parathymosin deduced from a cloned human kidney cDNA.</title>
        <authorList>
            <person name="Clinton M."/>
            <person name="Frangou-Lazaridis M."/>
            <person name="Panneerselvam C."/>
            <person name="Horecker B.L."/>
        </authorList>
    </citation>
    <scope>NUCLEOTIDE SEQUENCE [MRNA]</scope>
    <source>
        <tissue>Kidney</tissue>
    </source>
</reference>
<reference key="2">
    <citation type="submission" date="2008-12" db="UniProtKB">
        <authorList>
            <person name="Lubec G."/>
            <person name="Chen W.-Q."/>
            <person name="Sun Y."/>
        </authorList>
    </citation>
    <scope>PROTEIN SEQUENCE OF 5-15</scope>
    <scope>IDENTIFICATION BY MASS SPECTROMETRY</scope>
    <source>
        <tissue>Fetal brain cortex</tissue>
    </source>
</reference>
<reference key="3">
    <citation type="journal article" date="2009" name="Science">
        <title>Lysine acetylation targets protein complexes and co-regulates major cellular functions.</title>
        <authorList>
            <person name="Choudhary C."/>
            <person name="Kumar C."/>
            <person name="Gnad F."/>
            <person name="Nielsen M.L."/>
            <person name="Rehman M."/>
            <person name="Walther T.C."/>
            <person name="Olsen J.V."/>
            <person name="Mann M."/>
        </authorList>
    </citation>
    <scope>ACETYLATION [LARGE SCALE ANALYSIS] AT LYS-4; LYS-15 AND LYS-92</scope>
    <scope>IDENTIFICATION BY MASS SPECTROMETRY [LARGE SCALE ANALYSIS]</scope>
</reference>
<reference key="4">
    <citation type="journal article" date="2010" name="Sci. Signal.">
        <title>Quantitative phosphoproteomics reveals widespread full phosphorylation site occupancy during mitosis.</title>
        <authorList>
            <person name="Olsen J.V."/>
            <person name="Vermeulen M."/>
            <person name="Santamaria A."/>
            <person name="Kumar C."/>
            <person name="Miller M.L."/>
            <person name="Jensen L.J."/>
            <person name="Gnad F."/>
            <person name="Cox J."/>
            <person name="Jensen T.S."/>
            <person name="Nigg E.A."/>
            <person name="Brunak S."/>
            <person name="Mann M."/>
        </authorList>
    </citation>
    <scope>PHOSPHORYLATION [LARGE SCALE ANALYSIS] AT SER-5</scope>
    <scope>IDENTIFICATION BY MASS SPECTROMETRY [LARGE SCALE ANALYSIS]</scope>
    <source>
        <tissue>Cervix carcinoma</tissue>
    </source>
</reference>
<reference key="5">
    <citation type="journal article" date="2011" name="BMC Syst. Biol.">
        <title>Initial characterization of the human central proteome.</title>
        <authorList>
            <person name="Burkard T.R."/>
            <person name="Planyavsky M."/>
            <person name="Kaupe I."/>
            <person name="Breitwieser F.P."/>
            <person name="Buerckstuemmer T."/>
            <person name="Bennett K.L."/>
            <person name="Superti-Furga G."/>
            <person name="Colinge J."/>
        </authorList>
    </citation>
    <scope>IDENTIFICATION BY MASS SPECTROMETRY [LARGE SCALE ANALYSIS]</scope>
</reference>
<reference key="6">
    <citation type="journal article" date="2011" name="Sci. Signal.">
        <title>System-wide temporal characterization of the proteome and phosphoproteome of human embryonic stem cell differentiation.</title>
        <authorList>
            <person name="Rigbolt K.T."/>
            <person name="Prokhorova T.A."/>
            <person name="Akimov V."/>
            <person name="Henningsen J."/>
            <person name="Johansen P.T."/>
            <person name="Kratchmarova I."/>
            <person name="Kassem M."/>
            <person name="Mann M."/>
            <person name="Olsen J.V."/>
            <person name="Blagoev B."/>
        </authorList>
    </citation>
    <scope>PHOSPHORYLATION [LARGE SCALE ANALYSIS] AT SER-5</scope>
    <scope>IDENTIFICATION BY MASS SPECTROMETRY [LARGE SCALE ANALYSIS]</scope>
</reference>
<reference key="7">
    <citation type="journal article" date="2012" name="Proc. Natl. Acad. Sci. U.S.A.">
        <title>N-terminal acetylome analyses and functional insights of the N-terminal acetyltransferase NatB.</title>
        <authorList>
            <person name="Van Damme P."/>
            <person name="Lasa M."/>
            <person name="Polevoda B."/>
            <person name="Gazquez C."/>
            <person name="Elosegui-Artola A."/>
            <person name="Kim D.S."/>
            <person name="De Juan-Pardo E."/>
            <person name="Demeyer K."/>
            <person name="Hole K."/>
            <person name="Larrea E."/>
            <person name="Timmerman E."/>
            <person name="Prieto J."/>
            <person name="Arnesen T."/>
            <person name="Sherman F."/>
            <person name="Gevaert K."/>
            <person name="Aldabe R."/>
        </authorList>
    </citation>
    <scope>ACETYLATION [LARGE SCALE ANALYSIS] AT SER-2</scope>
    <scope>CLEAVAGE OF INITIATOR METHIONINE [LARGE SCALE ANALYSIS]</scope>
    <scope>IDENTIFICATION BY MASS SPECTROMETRY [LARGE SCALE ANALYSIS]</scope>
</reference>
<reference key="8">
    <citation type="journal article" date="2013" name="J. Proteome Res.">
        <title>Toward a comprehensive characterization of a human cancer cell phosphoproteome.</title>
        <authorList>
            <person name="Zhou H."/>
            <person name="Di Palma S."/>
            <person name="Preisinger C."/>
            <person name="Peng M."/>
            <person name="Polat A.N."/>
            <person name="Heck A.J."/>
            <person name="Mohammed S."/>
        </authorList>
    </citation>
    <scope>PHOSPHORYLATION [LARGE SCALE ANALYSIS] AT SER-2 AND SER-5</scope>
    <scope>IDENTIFICATION BY MASS SPECTROMETRY [LARGE SCALE ANALYSIS]</scope>
    <source>
        <tissue>Cervix carcinoma</tissue>
        <tissue>Erythroleukemia</tissue>
    </source>
</reference>
<reference key="9">
    <citation type="journal article" date="2014" name="J. Proteomics">
        <title>An enzyme assisted RP-RPLC approach for in-depth analysis of human liver phosphoproteome.</title>
        <authorList>
            <person name="Bian Y."/>
            <person name="Song C."/>
            <person name="Cheng K."/>
            <person name="Dong M."/>
            <person name="Wang F."/>
            <person name="Huang J."/>
            <person name="Sun D."/>
            <person name="Wang L."/>
            <person name="Ye M."/>
            <person name="Zou H."/>
        </authorList>
    </citation>
    <scope>IDENTIFICATION BY MASS SPECTROMETRY [LARGE SCALE ANALYSIS]</scope>
    <source>
        <tissue>Liver</tissue>
    </source>
</reference>
<accession>P20962</accession>
<evidence type="ECO:0000250" key="1">
    <source>
        <dbReference type="UniProtKB" id="P04550"/>
    </source>
</evidence>
<evidence type="ECO:0000250" key="2">
    <source>
        <dbReference type="UniProtKB" id="Q9D0J8"/>
    </source>
</evidence>
<evidence type="ECO:0000256" key="3">
    <source>
        <dbReference type="SAM" id="MobiDB-lite"/>
    </source>
</evidence>
<evidence type="ECO:0000305" key="4"/>
<evidence type="ECO:0007744" key="5">
    <source>
    </source>
</evidence>
<evidence type="ECO:0007744" key="6">
    <source>
    </source>
</evidence>
<evidence type="ECO:0007744" key="7">
    <source>
    </source>
</evidence>
<evidence type="ECO:0007744" key="8">
    <source>
    </source>
</evidence>
<evidence type="ECO:0007744" key="9">
    <source>
    </source>
</evidence>
<dbReference type="EMBL" id="M24398">
    <property type="protein sequence ID" value="AAA61185.1"/>
    <property type="molecule type" value="mRNA"/>
</dbReference>
<dbReference type="CCDS" id="CCDS8560.1"/>
<dbReference type="PIR" id="A32264">
    <property type="entry name" value="A32264"/>
</dbReference>
<dbReference type="RefSeq" id="NP_002815.3">
    <property type="nucleotide sequence ID" value="NM_002824.5"/>
</dbReference>
<dbReference type="SMR" id="P20962"/>
<dbReference type="BioGRID" id="111730">
    <property type="interactions" value="86"/>
</dbReference>
<dbReference type="FunCoup" id="P20962">
    <property type="interactions" value="154"/>
</dbReference>
<dbReference type="IntAct" id="P20962">
    <property type="interactions" value="22"/>
</dbReference>
<dbReference type="MINT" id="P20962"/>
<dbReference type="iPTMnet" id="P20962"/>
<dbReference type="PhosphoSitePlus" id="P20962"/>
<dbReference type="SwissPalm" id="P20962"/>
<dbReference type="BioMuta" id="PTMS"/>
<dbReference type="CPTAC" id="CPTAC-1532"/>
<dbReference type="CPTAC" id="CPTAC-1533"/>
<dbReference type="jPOST" id="P20962"/>
<dbReference type="MassIVE" id="P20962"/>
<dbReference type="PaxDb" id="9606-ENSP00000478828"/>
<dbReference type="PeptideAtlas" id="P20962"/>
<dbReference type="ProteomicsDB" id="53832"/>
<dbReference type="Pumba" id="P20962"/>
<dbReference type="TopDownProteomics" id="P20962"/>
<dbReference type="Antibodypedia" id="22672">
    <property type="antibodies" value="160 antibodies from 22 providers"/>
</dbReference>
<dbReference type="DNASU" id="5763"/>
<dbReference type="Ensembl" id="ENST00000309083.8">
    <property type="protein sequence ID" value="ENSP00000310088.7"/>
    <property type="gene ID" value="ENSG00000159335.19"/>
</dbReference>
<dbReference type="GeneID" id="5763"/>
<dbReference type="KEGG" id="hsa:5763"/>
<dbReference type="MANE-Select" id="ENST00000309083.8">
    <property type="protein sequence ID" value="ENSP00000310088.7"/>
    <property type="RefSeq nucleotide sequence ID" value="NM_002824.6"/>
    <property type="RefSeq protein sequence ID" value="NP_002815.3"/>
</dbReference>
<dbReference type="UCSC" id="uc001qqq.3">
    <property type="organism name" value="human"/>
</dbReference>
<dbReference type="AGR" id="HGNC:9629"/>
<dbReference type="CTD" id="5763"/>
<dbReference type="DisGeNET" id="5763"/>
<dbReference type="GeneCards" id="PTMS"/>
<dbReference type="HGNC" id="HGNC:9629">
    <property type="gene designation" value="PTMS"/>
</dbReference>
<dbReference type="HPA" id="ENSG00000159335">
    <property type="expression patterns" value="Tissue enhanced (liver)"/>
</dbReference>
<dbReference type="MIM" id="168440">
    <property type="type" value="gene"/>
</dbReference>
<dbReference type="neXtProt" id="NX_P20962"/>
<dbReference type="OpenTargets" id="ENSG00000159335"/>
<dbReference type="PharmGKB" id="PA33973"/>
<dbReference type="VEuPathDB" id="HostDB:ENSG00000159335"/>
<dbReference type="eggNOG" id="ENOG502SSXW">
    <property type="taxonomic scope" value="Eukaryota"/>
</dbReference>
<dbReference type="GeneTree" id="ENSGT01030000234816"/>
<dbReference type="HOGENOM" id="CLU_087174_1_0_1"/>
<dbReference type="InParanoid" id="P20962"/>
<dbReference type="OMA" id="HEEKSAH"/>
<dbReference type="PAN-GO" id="P20962">
    <property type="GO annotations" value="4 GO annotations based on evolutionary models"/>
</dbReference>
<dbReference type="PathwayCommons" id="P20962"/>
<dbReference type="SignaLink" id="P20962"/>
<dbReference type="SIGNOR" id="P20962"/>
<dbReference type="BioGRID-ORCS" id="5763">
    <property type="hits" value="157 hits in 1164 CRISPR screens"/>
</dbReference>
<dbReference type="CD-CODE" id="91857CE7">
    <property type="entry name" value="Nucleolus"/>
</dbReference>
<dbReference type="ChiTaRS" id="PTMS">
    <property type="organism name" value="human"/>
</dbReference>
<dbReference type="GeneWiki" id="PTMS_(gene)"/>
<dbReference type="GenomeRNAi" id="5763"/>
<dbReference type="Pharos" id="P20962">
    <property type="development level" value="Tbio"/>
</dbReference>
<dbReference type="PRO" id="PR:P20962"/>
<dbReference type="Proteomes" id="UP000005640">
    <property type="component" value="Chromosome 12"/>
</dbReference>
<dbReference type="RNAct" id="P20962">
    <property type="molecule type" value="protein"/>
</dbReference>
<dbReference type="Bgee" id="ENSG00000159335">
    <property type="expression patterns" value="Expressed in tendon of biceps brachii and 174 other cell types or tissues"/>
</dbReference>
<dbReference type="ExpressionAtlas" id="P20962">
    <property type="expression patterns" value="baseline and differential"/>
</dbReference>
<dbReference type="GO" id="GO:0005634">
    <property type="term" value="C:nucleus"/>
    <property type="evidence" value="ECO:0000318"/>
    <property type="project" value="GO_Central"/>
</dbReference>
<dbReference type="GO" id="GO:0042393">
    <property type="term" value="F:histone binding"/>
    <property type="evidence" value="ECO:0000318"/>
    <property type="project" value="GO_Central"/>
</dbReference>
<dbReference type="GO" id="GO:0006260">
    <property type="term" value="P:DNA replication"/>
    <property type="evidence" value="ECO:0000304"/>
    <property type="project" value="ProtInc"/>
</dbReference>
<dbReference type="GO" id="GO:0002376">
    <property type="term" value="P:immune system process"/>
    <property type="evidence" value="ECO:0007669"/>
    <property type="project" value="UniProtKB-KW"/>
</dbReference>
<dbReference type="GO" id="GO:0043066">
    <property type="term" value="P:negative regulation of apoptotic process"/>
    <property type="evidence" value="ECO:0000318"/>
    <property type="project" value="GO_Central"/>
</dbReference>
<dbReference type="GO" id="GO:0045944">
    <property type="term" value="P:positive regulation of transcription by RNA polymerase II"/>
    <property type="evidence" value="ECO:0000318"/>
    <property type="project" value="GO_Central"/>
</dbReference>
<dbReference type="InterPro" id="IPR004931">
    <property type="entry name" value="Pro/parathymosin"/>
</dbReference>
<dbReference type="PANTHER" id="PTHR22745:SF3">
    <property type="entry name" value="PARATHYMOSIN"/>
    <property type="match status" value="1"/>
</dbReference>
<dbReference type="PANTHER" id="PTHR22745">
    <property type="entry name" value="PROTHYMOSIN ALPHA"/>
    <property type="match status" value="1"/>
</dbReference>
<dbReference type="Pfam" id="PF03247">
    <property type="entry name" value="Prothymosin"/>
    <property type="match status" value="1"/>
</dbReference>
<protein>
    <recommendedName>
        <fullName>Parathymosin</fullName>
    </recommendedName>
</protein>
<organism>
    <name type="scientific">Homo sapiens</name>
    <name type="common">Human</name>
    <dbReference type="NCBI Taxonomy" id="9606"/>
    <lineage>
        <taxon>Eukaryota</taxon>
        <taxon>Metazoa</taxon>
        <taxon>Chordata</taxon>
        <taxon>Craniata</taxon>
        <taxon>Vertebrata</taxon>
        <taxon>Euteleostomi</taxon>
        <taxon>Mammalia</taxon>
        <taxon>Eutheria</taxon>
        <taxon>Euarchontoglires</taxon>
        <taxon>Primates</taxon>
        <taxon>Haplorrhini</taxon>
        <taxon>Catarrhini</taxon>
        <taxon>Hominidae</taxon>
        <taxon>Homo</taxon>
    </lineage>
</organism>
<feature type="initiator methionine" description="Removed" evidence="8">
    <location>
        <position position="1"/>
    </location>
</feature>
<feature type="chain" id="PRO_0000191632" description="Parathymosin">
    <location>
        <begin position="2"/>
        <end position="102"/>
    </location>
</feature>
<feature type="region of interest" description="Disordered" evidence="3">
    <location>
        <begin position="1"/>
        <end position="102"/>
    </location>
</feature>
<feature type="compositionally biased region" description="Basic and acidic residues" evidence="3">
    <location>
        <begin position="13"/>
        <end position="37"/>
    </location>
</feature>
<feature type="compositionally biased region" description="Acidic residues" evidence="3">
    <location>
        <begin position="38"/>
        <end position="76"/>
    </location>
</feature>
<feature type="modified residue" description="N-acetylserine" evidence="8">
    <location>
        <position position="2"/>
    </location>
</feature>
<feature type="modified residue" description="Phosphoserine" evidence="9">
    <location>
        <position position="2"/>
    </location>
</feature>
<feature type="modified residue" description="N6-acetyllysine" evidence="5">
    <location>
        <position position="4"/>
    </location>
</feature>
<feature type="modified residue" description="Phosphoserine" evidence="6 7 9">
    <location>
        <position position="5"/>
    </location>
</feature>
<feature type="modified residue" description="Phosphoserine" evidence="2">
    <location>
        <position position="13"/>
    </location>
</feature>
<feature type="modified residue" description="N6-acetyllysine" evidence="5">
    <location>
        <position position="15"/>
    </location>
</feature>
<feature type="modified residue" description="Phosphothreonine" evidence="1">
    <location>
        <position position="52"/>
    </location>
</feature>
<feature type="modified residue" description="N6-acetyllysine" evidence="5">
    <location>
        <position position="92"/>
    </location>
</feature>
<keyword id="KW-0007">Acetylation</keyword>
<keyword id="KW-0903">Direct protein sequencing</keyword>
<keyword id="KW-0391">Immunity</keyword>
<keyword id="KW-0597">Phosphoprotein</keyword>
<keyword id="KW-1267">Proteomics identification</keyword>
<keyword id="KW-1185">Reference proteome</keyword>
<name>PTMS_HUMAN</name>
<comment type="function">
    <text>Parathymosin may mediate immune function by blocking the effect of prothymosin alpha which confers resistance to certain opportunistic infections.</text>
</comment>
<comment type="similarity">
    <text evidence="4">Belongs to the pro/parathymosin family.</text>
</comment>